<comment type="function">
    <text evidence="1">Functions as ATP-binding component of the Arp2/3 complex which is involved in regulation of actin polymerization and together with an activating nucleation-promoting factor (NPF) mediates the formation of branched actin networks. Seems to contact the pointed end of the daughter actin filament. Regulates the directionality of cell expansion by regulating the actin organization, and thus the microtubules distribution and the fusion of small vacuoles (By similarity).</text>
</comment>
<comment type="subunit">
    <text evidence="1">Component of the Arp2/3 complex.</text>
</comment>
<comment type="subcellular location">
    <subcellularLocation>
        <location evidence="1">Cytoplasm</location>
        <location evidence="1">Cytoskeleton</location>
    </subcellularLocation>
</comment>
<comment type="similarity">
    <text evidence="2">Belongs to the actin family. ARP2 subfamily.</text>
</comment>
<comment type="sequence caution" evidence="2">
    <conflict type="erroneous gene model prediction">
        <sequence resource="EMBL-CDS" id="BAF23569"/>
    </conflict>
</comment>
<proteinExistence type="inferred from homology"/>
<organism>
    <name type="scientific">Oryza sativa subsp. japonica</name>
    <name type="common">Rice</name>
    <dbReference type="NCBI Taxonomy" id="39947"/>
    <lineage>
        <taxon>Eukaryota</taxon>
        <taxon>Viridiplantae</taxon>
        <taxon>Streptophyta</taxon>
        <taxon>Embryophyta</taxon>
        <taxon>Tracheophyta</taxon>
        <taxon>Spermatophyta</taxon>
        <taxon>Magnoliopsida</taxon>
        <taxon>Liliopsida</taxon>
        <taxon>Poales</taxon>
        <taxon>Poaceae</taxon>
        <taxon>BOP clade</taxon>
        <taxon>Oryzoideae</taxon>
        <taxon>Oryzeae</taxon>
        <taxon>Oryzinae</taxon>
        <taxon>Oryza</taxon>
        <taxon>Oryza sativa</taxon>
    </lineage>
</organism>
<sequence>MDSGNVVVCDNGTGYVKCGFAGENFPTSVFPCVVGRPLLRYEESLQEQELTDIVVGAACADLRHQLDVSYPVTNGIVQSWDDMGHIWDHAFYSELKVDPSECKILLTDPPLNPVKNREKMIETMFEKYNFAGVFIQVQAVLSLYAQGLLTGLVIDSGDGVTHVVPVVDGFSYPHITKRMNVAGRHITSYLVDLLSRRGYAMNKSADFETVREIKEKLCYLSYDYKREYQLGLETTILVKSYTLPDGRVIKVGTERFQAPEALFTPELIDVEGDGMADMAFRCIQEMDIDNRMTLYQHIVLSGGSTMYPGLPSRLEKEMLDRYLDVVLKGNKDGLKKLRLRIEDPPRRKHMVYLGGAVLAGIMKDSPEFWITRQEYQEEGLACLRKCGQA</sequence>
<reference key="1">
    <citation type="journal article" date="2005" name="Nature">
        <title>The map-based sequence of the rice genome.</title>
        <authorList>
            <consortium name="International rice genome sequencing project (IRGSP)"/>
        </authorList>
    </citation>
    <scope>NUCLEOTIDE SEQUENCE [LARGE SCALE GENOMIC DNA]</scope>
    <source>
        <strain>cv. Nipponbare</strain>
    </source>
</reference>
<reference key="2">
    <citation type="journal article" date="2008" name="Nucleic Acids Res.">
        <title>The rice annotation project database (RAP-DB): 2008 update.</title>
        <authorList>
            <consortium name="The rice annotation project (RAP)"/>
        </authorList>
    </citation>
    <scope>GENOME REANNOTATION</scope>
    <source>
        <strain>cv. Nipponbare</strain>
    </source>
</reference>
<reference key="3">
    <citation type="journal article" date="2013" name="Rice">
        <title>Improvement of the Oryza sativa Nipponbare reference genome using next generation sequence and optical map data.</title>
        <authorList>
            <person name="Kawahara Y."/>
            <person name="de la Bastide M."/>
            <person name="Hamilton J.P."/>
            <person name="Kanamori H."/>
            <person name="McCombie W.R."/>
            <person name="Ouyang S."/>
            <person name="Schwartz D.C."/>
            <person name="Tanaka T."/>
            <person name="Wu J."/>
            <person name="Zhou S."/>
            <person name="Childs K.L."/>
            <person name="Davidson R.M."/>
            <person name="Lin H."/>
            <person name="Quesada-Ocampo L."/>
            <person name="Vaillancourt B."/>
            <person name="Sakai H."/>
            <person name="Lee S.S."/>
            <person name="Kim J."/>
            <person name="Numa H."/>
            <person name="Itoh T."/>
            <person name="Buell C.R."/>
            <person name="Matsumoto T."/>
        </authorList>
    </citation>
    <scope>GENOME REANNOTATION</scope>
    <source>
        <strain>cv. Nipponbare</strain>
    </source>
</reference>
<reference key="4">
    <citation type="journal article" date="2005" name="PLoS Biol.">
        <title>The genomes of Oryza sativa: a history of duplications.</title>
        <authorList>
            <person name="Yu J."/>
            <person name="Wang J."/>
            <person name="Lin W."/>
            <person name="Li S."/>
            <person name="Li H."/>
            <person name="Zhou J."/>
            <person name="Ni P."/>
            <person name="Dong W."/>
            <person name="Hu S."/>
            <person name="Zeng C."/>
            <person name="Zhang J."/>
            <person name="Zhang Y."/>
            <person name="Li R."/>
            <person name="Xu Z."/>
            <person name="Li S."/>
            <person name="Li X."/>
            <person name="Zheng H."/>
            <person name="Cong L."/>
            <person name="Lin L."/>
            <person name="Yin J."/>
            <person name="Geng J."/>
            <person name="Li G."/>
            <person name="Shi J."/>
            <person name="Liu J."/>
            <person name="Lv H."/>
            <person name="Li J."/>
            <person name="Wang J."/>
            <person name="Deng Y."/>
            <person name="Ran L."/>
            <person name="Shi X."/>
            <person name="Wang X."/>
            <person name="Wu Q."/>
            <person name="Li C."/>
            <person name="Ren X."/>
            <person name="Wang J."/>
            <person name="Wang X."/>
            <person name="Li D."/>
            <person name="Liu D."/>
            <person name="Zhang X."/>
            <person name="Ji Z."/>
            <person name="Zhao W."/>
            <person name="Sun Y."/>
            <person name="Zhang Z."/>
            <person name="Bao J."/>
            <person name="Han Y."/>
            <person name="Dong L."/>
            <person name="Ji J."/>
            <person name="Chen P."/>
            <person name="Wu S."/>
            <person name="Liu J."/>
            <person name="Xiao Y."/>
            <person name="Bu D."/>
            <person name="Tan J."/>
            <person name="Yang L."/>
            <person name="Ye C."/>
            <person name="Zhang J."/>
            <person name="Xu J."/>
            <person name="Zhou Y."/>
            <person name="Yu Y."/>
            <person name="Zhang B."/>
            <person name="Zhuang S."/>
            <person name="Wei H."/>
            <person name="Liu B."/>
            <person name="Lei M."/>
            <person name="Yu H."/>
            <person name="Li Y."/>
            <person name="Xu H."/>
            <person name="Wei S."/>
            <person name="He X."/>
            <person name="Fang L."/>
            <person name="Zhang Z."/>
            <person name="Zhang Y."/>
            <person name="Huang X."/>
            <person name="Su Z."/>
            <person name="Tong W."/>
            <person name="Li J."/>
            <person name="Tong Z."/>
            <person name="Li S."/>
            <person name="Ye J."/>
            <person name="Wang L."/>
            <person name="Fang L."/>
            <person name="Lei T."/>
            <person name="Chen C.-S."/>
            <person name="Chen H.-C."/>
            <person name="Xu Z."/>
            <person name="Li H."/>
            <person name="Huang H."/>
            <person name="Zhang F."/>
            <person name="Xu H."/>
            <person name="Li N."/>
            <person name="Zhao C."/>
            <person name="Li S."/>
            <person name="Dong L."/>
            <person name="Huang Y."/>
            <person name="Li L."/>
            <person name="Xi Y."/>
            <person name="Qi Q."/>
            <person name="Li W."/>
            <person name="Zhang B."/>
            <person name="Hu W."/>
            <person name="Zhang Y."/>
            <person name="Tian X."/>
            <person name="Jiao Y."/>
            <person name="Liang X."/>
            <person name="Jin J."/>
            <person name="Gao L."/>
            <person name="Zheng W."/>
            <person name="Hao B."/>
            <person name="Liu S.-M."/>
            <person name="Wang W."/>
            <person name="Yuan L."/>
            <person name="Cao M."/>
            <person name="McDermott J."/>
            <person name="Samudrala R."/>
            <person name="Wang J."/>
            <person name="Wong G.K.-S."/>
            <person name="Yang H."/>
        </authorList>
    </citation>
    <scope>NUCLEOTIDE SEQUENCE [LARGE SCALE GENOMIC DNA]</scope>
    <source>
        <strain>cv. Nipponbare</strain>
    </source>
</reference>
<reference key="5">
    <citation type="journal article" date="2004" name="Trends Plant Sci.">
        <title>Plant actin-related proteins.</title>
        <authorList>
            <person name="Kandasamy M.K."/>
            <person name="Deal R.B."/>
            <person name="McKinney E.C."/>
            <person name="Meagher R.B."/>
        </authorList>
    </citation>
    <scope>REVIEW</scope>
    <scope>GENE FAMILY</scope>
    <scope>NOMENCLATURE</scope>
</reference>
<feature type="chain" id="PRO_0000320523" description="Actin-related protein 2">
    <location>
        <begin position="1"/>
        <end position="389"/>
    </location>
</feature>
<feature type="binding site" evidence="1">
    <location>
        <begin position="157"/>
        <end position="159"/>
    </location>
    <ligand>
        <name>ATP</name>
        <dbReference type="ChEBI" id="CHEBI:30616"/>
    </ligand>
</feature>
<feature type="binding site" evidence="1">
    <location>
        <begin position="211"/>
        <end position="215"/>
    </location>
    <ligand>
        <name>ATP</name>
        <dbReference type="ChEBI" id="CHEBI:30616"/>
    </ligand>
</feature>
<feature type="binding site" evidence="1">
    <location>
        <begin position="302"/>
        <end position="307"/>
    </location>
    <ligand>
        <name>ATP</name>
        <dbReference type="ChEBI" id="CHEBI:30616"/>
    </ligand>
</feature>
<evidence type="ECO:0000250" key="1"/>
<evidence type="ECO:0000305" key="2"/>
<gene>
    <name type="primary">ARP2</name>
    <name type="ordered locus">Os08g0369300</name>
    <name type="ordered locus">LOC_Os08g28190</name>
    <name type="ORF">OJ1770_H03.15</name>
    <name type="ORF">OsJ_026006</name>
    <name type="ORF">OSJNBa0091C18.37</name>
</gene>
<keyword id="KW-0009">Actin-binding</keyword>
<keyword id="KW-0067">ATP-binding</keyword>
<keyword id="KW-0963">Cytoplasm</keyword>
<keyword id="KW-0206">Cytoskeleton</keyword>
<keyword id="KW-0217">Developmental protein</keyword>
<keyword id="KW-0547">Nucleotide-binding</keyword>
<keyword id="KW-1185">Reference proteome</keyword>
<accession>Q6Z256</accession>
<accession>A3BSI4</accession>
<accession>Q0J646</accession>
<name>ARP2_ORYSJ</name>
<protein>
    <recommendedName>
        <fullName>Actin-related protein 2</fullName>
    </recommendedName>
</protein>
<dbReference type="EMBL" id="AP005298">
    <property type="protein sequence ID" value="BAD03487.1"/>
    <property type="molecule type" value="Genomic_DNA"/>
</dbReference>
<dbReference type="EMBL" id="AP005389">
    <property type="protein sequence ID" value="BAD03538.1"/>
    <property type="molecule type" value="Genomic_DNA"/>
</dbReference>
<dbReference type="EMBL" id="AP008214">
    <property type="protein sequence ID" value="BAF23569.2"/>
    <property type="status" value="ALT_SEQ"/>
    <property type="molecule type" value="Genomic_DNA"/>
</dbReference>
<dbReference type="EMBL" id="AP014964">
    <property type="status" value="NOT_ANNOTATED_CDS"/>
    <property type="molecule type" value="Genomic_DNA"/>
</dbReference>
<dbReference type="EMBL" id="CM000145">
    <property type="status" value="NOT_ANNOTATED_CDS"/>
    <property type="molecule type" value="Genomic_DNA"/>
</dbReference>
<dbReference type="RefSeq" id="XP_015648325.1">
    <property type="nucleotide sequence ID" value="XM_015792839.1"/>
</dbReference>
<dbReference type="RefSeq" id="XP_015648326.1">
    <property type="nucleotide sequence ID" value="XM_015792840.1"/>
</dbReference>
<dbReference type="SMR" id="Q6Z256"/>
<dbReference type="FunCoup" id="Q6Z256">
    <property type="interactions" value="2692"/>
</dbReference>
<dbReference type="STRING" id="39947.Q6Z256"/>
<dbReference type="PaxDb" id="39947-Q6Z256"/>
<dbReference type="GeneID" id="4345402"/>
<dbReference type="KEGG" id="dosa:Os08g0369300"/>
<dbReference type="KEGG" id="osa:4345402"/>
<dbReference type="eggNOG" id="KOG0677">
    <property type="taxonomic scope" value="Eukaryota"/>
</dbReference>
<dbReference type="InParanoid" id="Q6Z256"/>
<dbReference type="OrthoDB" id="5132116at2759"/>
<dbReference type="Proteomes" id="UP000000763">
    <property type="component" value="Chromosome 8"/>
</dbReference>
<dbReference type="Proteomes" id="UP000007752">
    <property type="component" value="Chromosome 8"/>
</dbReference>
<dbReference type="Proteomes" id="UP000059680">
    <property type="component" value="Chromosome 8"/>
</dbReference>
<dbReference type="GO" id="GO:0005885">
    <property type="term" value="C:Arp2/3 protein complex"/>
    <property type="evidence" value="ECO:0000318"/>
    <property type="project" value="GO_Central"/>
</dbReference>
<dbReference type="GO" id="GO:0005938">
    <property type="term" value="C:cell cortex"/>
    <property type="evidence" value="ECO:0000318"/>
    <property type="project" value="GO_Central"/>
</dbReference>
<dbReference type="GO" id="GO:0003779">
    <property type="term" value="F:actin binding"/>
    <property type="evidence" value="ECO:0007669"/>
    <property type="project" value="UniProtKB-KW"/>
</dbReference>
<dbReference type="GO" id="GO:0005524">
    <property type="term" value="F:ATP binding"/>
    <property type="evidence" value="ECO:0007669"/>
    <property type="project" value="UniProtKB-KW"/>
</dbReference>
<dbReference type="GO" id="GO:0034314">
    <property type="term" value="P:Arp2/3 complex-mediated actin nucleation"/>
    <property type="evidence" value="ECO:0000318"/>
    <property type="project" value="GO_Central"/>
</dbReference>
<dbReference type="CDD" id="cd10220">
    <property type="entry name" value="ASKHA_NBD_Arp2"/>
    <property type="match status" value="1"/>
</dbReference>
<dbReference type="FunFam" id="3.30.420.40:FF:000148">
    <property type="entry name" value="Actin, alpha skeletal muscle"/>
    <property type="match status" value="1"/>
</dbReference>
<dbReference type="FunFam" id="3.90.640.10:FF:000005">
    <property type="entry name" value="Actin-related protein 2"/>
    <property type="match status" value="1"/>
</dbReference>
<dbReference type="Gene3D" id="3.30.420.40">
    <property type="match status" value="2"/>
</dbReference>
<dbReference type="Gene3D" id="3.90.640.10">
    <property type="entry name" value="Actin, Chain A, domain 4"/>
    <property type="match status" value="1"/>
</dbReference>
<dbReference type="InterPro" id="IPR004000">
    <property type="entry name" value="Actin"/>
</dbReference>
<dbReference type="InterPro" id="IPR043129">
    <property type="entry name" value="ATPase_NBD"/>
</dbReference>
<dbReference type="PANTHER" id="PTHR11937">
    <property type="entry name" value="ACTIN"/>
    <property type="match status" value="1"/>
</dbReference>
<dbReference type="Pfam" id="PF00022">
    <property type="entry name" value="Actin"/>
    <property type="match status" value="1"/>
</dbReference>
<dbReference type="PRINTS" id="PR00190">
    <property type="entry name" value="ACTIN"/>
</dbReference>
<dbReference type="SMART" id="SM00268">
    <property type="entry name" value="ACTIN"/>
    <property type="match status" value="1"/>
</dbReference>
<dbReference type="SUPFAM" id="SSF53067">
    <property type="entry name" value="Actin-like ATPase domain"/>
    <property type="match status" value="2"/>
</dbReference>